<protein>
    <recommendedName>
        <fullName>Cytochrome b</fullName>
    </recommendedName>
    <alternativeName>
        <fullName>Complex III subunit 3</fullName>
    </alternativeName>
    <alternativeName>
        <fullName>Complex III subunit III</fullName>
    </alternativeName>
    <alternativeName>
        <fullName>Cytochrome b-c1 complex subunit 3</fullName>
    </alternativeName>
    <alternativeName>
        <fullName>Ubiquinol-cytochrome-c reductase complex cytochrome b subunit</fullName>
    </alternativeName>
</protein>
<reference key="1">
    <citation type="submission" date="2000-04" db="EMBL/GenBank/DDBJ databases">
        <title>A mitochondrial sequence-based phylogenetic analysis of Parula wood-warblers.</title>
        <authorList>
            <person name="Lovette I.J."/>
            <person name="Bermingham E."/>
        </authorList>
    </citation>
    <scope>NUCLEOTIDE SEQUENCE [GENOMIC DNA]</scope>
    <source>
        <strain>Isolate STRI US-VRU5040</strain>
    </source>
</reference>
<geneLocation type="mitochondrion"/>
<feature type="chain" id="PRO_0000061713" description="Cytochrome b">
    <location>
        <begin position="1"/>
        <end position="380"/>
    </location>
</feature>
<feature type="transmembrane region" description="Helical" evidence="2">
    <location>
        <begin position="34"/>
        <end position="54"/>
    </location>
</feature>
<feature type="transmembrane region" description="Helical" evidence="2">
    <location>
        <begin position="78"/>
        <end position="99"/>
    </location>
</feature>
<feature type="transmembrane region" description="Helical" evidence="2">
    <location>
        <begin position="114"/>
        <end position="134"/>
    </location>
</feature>
<feature type="transmembrane region" description="Helical" evidence="2">
    <location>
        <begin position="179"/>
        <end position="199"/>
    </location>
</feature>
<feature type="transmembrane region" description="Helical" evidence="2">
    <location>
        <begin position="227"/>
        <end position="247"/>
    </location>
</feature>
<feature type="transmembrane region" description="Helical" evidence="2">
    <location>
        <begin position="289"/>
        <end position="309"/>
    </location>
</feature>
<feature type="transmembrane region" description="Helical" evidence="2">
    <location>
        <begin position="321"/>
        <end position="341"/>
    </location>
</feature>
<feature type="transmembrane region" description="Helical" evidence="2">
    <location>
        <begin position="348"/>
        <end position="368"/>
    </location>
</feature>
<feature type="binding site" description="axial binding residue" evidence="2">
    <location>
        <position position="84"/>
    </location>
    <ligand>
        <name>heme b</name>
        <dbReference type="ChEBI" id="CHEBI:60344"/>
        <label>b562</label>
    </ligand>
    <ligandPart>
        <name>Fe</name>
        <dbReference type="ChEBI" id="CHEBI:18248"/>
    </ligandPart>
</feature>
<feature type="binding site" description="axial binding residue" evidence="2">
    <location>
        <position position="98"/>
    </location>
    <ligand>
        <name>heme b</name>
        <dbReference type="ChEBI" id="CHEBI:60344"/>
        <label>b566</label>
    </ligand>
    <ligandPart>
        <name>Fe</name>
        <dbReference type="ChEBI" id="CHEBI:18248"/>
    </ligandPart>
</feature>
<feature type="binding site" description="axial binding residue" evidence="2">
    <location>
        <position position="183"/>
    </location>
    <ligand>
        <name>heme b</name>
        <dbReference type="ChEBI" id="CHEBI:60344"/>
        <label>b562</label>
    </ligand>
    <ligandPart>
        <name>Fe</name>
        <dbReference type="ChEBI" id="CHEBI:18248"/>
    </ligandPart>
</feature>
<feature type="binding site" description="axial binding residue" evidence="2">
    <location>
        <position position="197"/>
    </location>
    <ligand>
        <name>heme b</name>
        <dbReference type="ChEBI" id="CHEBI:60344"/>
        <label>b566</label>
    </ligand>
    <ligandPart>
        <name>Fe</name>
        <dbReference type="ChEBI" id="CHEBI:18248"/>
    </ligandPart>
</feature>
<feature type="binding site" evidence="2">
    <location>
        <position position="202"/>
    </location>
    <ligand>
        <name>a ubiquinone</name>
        <dbReference type="ChEBI" id="CHEBI:16389"/>
    </ligand>
</feature>
<sequence>MALNLRKNHQILKIINDALIDLPAPSNISTWWNFGSLLGICLITQIITGLLLAMHYTADTNLAFSSVAHMCRDVQFGWLIRNLHANGASFFFICIYLHIGRGLYYGSYLNKETWNVGVVLLLALMATAFVGYVLPWGQMSFWGATVITNLFSAIPYIGQTLVEWAWGGFSVDNPTLTRFFALHFLLPFVIVGLTLVHLTFLHETGSNNPLGIPSDCDKIPFHPYYTIKDILGFALMLSLLVSLALFAPNLLGDPENFTPANPLVTPPHIKPEWYFLFAYAILRSIPNKLGGVLALAASILVLFLTPLLHTSKLRSMTFRPLSQILFWTLVANVLILTWVGSQPVEHPFIIIGQLASFTYFTIILVLFPLAAALENKLLKL</sequence>
<organism>
    <name type="scientific">Leiothlypis ruficapilla</name>
    <name type="common">Nashville warbler</name>
    <name type="synonym">Oreothlypis ruficapilla</name>
    <dbReference type="NCBI Taxonomy" id="125952"/>
    <lineage>
        <taxon>Eukaryota</taxon>
        <taxon>Metazoa</taxon>
        <taxon>Chordata</taxon>
        <taxon>Craniata</taxon>
        <taxon>Vertebrata</taxon>
        <taxon>Euteleostomi</taxon>
        <taxon>Archelosauria</taxon>
        <taxon>Archosauria</taxon>
        <taxon>Dinosauria</taxon>
        <taxon>Saurischia</taxon>
        <taxon>Theropoda</taxon>
        <taxon>Coelurosauria</taxon>
        <taxon>Aves</taxon>
        <taxon>Neognathae</taxon>
        <taxon>Neoaves</taxon>
        <taxon>Telluraves</taxon>
        <taxon>Australaves</taxon>
        <taxon>Passeriformes</taxon>
        <taxon>Passeroidea</taxon>
        <taxon>Parulidae</taxon>
        <taxon>Leiothlypis</taxon>
    </lineage>
</organism>
<evidence type="ECO:0000250" key="1"/>
<evidence type="ECO:0000250" key="2">
    <source>
        <dbReference type="UniProtKB" id="P00157"/>
    </source>
</evidence>
<evidence type="ECO:0000255" key="3">
    <source>
        <dbReference type="PROSITE-ProRule" id="PRU00967"/>
    </source>
</evidence>
<evidence type="ECO:0000255" key="4">
    <source>
        <dbReference type="PROSITE-ProRule" id="PRU00968"/>
    </source>
</evidence>
<keyword id="KW-0249">Electron transport</keyword>
<keyword id="KW-0349">Heme</keyword>
<keyword id="KW-0408">Iron</keyword>
<keyword id="KW-0472">Membrane</keyword>
<keyword id="KW-0479">Metal-binding</keyword>
<keyword id="KW-0496">Mitochondrion</keyword>
<keyword id="KW-0999">Mitochondrion inner membrane</keyword>
<keyword id="KW-0679">Respiratory chain</keyword>
<keyword id="KW-0812">Transmembrane</keyword>
<keyword id="KW-1133">Transmembrane helix</keyword>
<keyword id="KW-0813">Transport</keyword>
<keyword id="KW-0830">Ubiquinone</keyword>
<proteinExistence type="inferred from homology"/>
<name>CYB_LEIRU</name>
<dbReference type="EMBL" id="AF256510">
    <property type="protein sequence ID" value="AAF71566.1"/>
    <property type="molecule type" value="Genomic_DNA"/>
</dbReference>
<dbReference type="SMR" id="Q9MJV1"/>
<dbReference type="GO" id="GO:0005743">
    <property type="term" value="C:mitochondrial inner membrane"/>
    <property type="evidence" value="ECO:0007669"/>
    <property type="project" value="UniProtKB-SubCell"/>
</dbReference>
<dbReference type="GO" id="GO:0045275">
    <property type="term" value="C:respiratory chain complex III"/>
    <property type="evidence" value="ECO:0007669"/>
    <property type="project" value="InterPro"/>
</dbReference>
<dbReference type="GO" id="GO:0046872">
    <property type="term" value="F:metal ion binding"/>
    <property type="evidence" value="ECO:0007669"/>
    <property type="project" value="UniProtKB-KW"/>
</dbReference>
<dbReference type="GO" id="GO:0008121">
    <property type="term" value="F:ubiquinol-cytochrome-c reductase activity"/>
    <property type="evidence" value="ECO:0007669"/>
    <property type="project" value="InterPro"/>
</dbReference>
<dbReference type="GO" id="GO:0006122">
    <property type="term" value="P:mitochondrial electron transport, ubiquinol to cytochrome c"/>
    <property type="evidence" value="ECO:0007669"/>
    <property type="project" value="TreeGrafter"/>
</dbReference>
<dbReference type="CDD" id="cd00290">
    <property type="entry name" value="cytochrome_b_C"/>
    <property type="match status" value="1"/>
</dbReference>
<dbReference type="CDD" id="cd00284">
    <property type="entry name" value="Cytochrome_b_N"/>
    <property type="match status" value="1"/>
</dbReference>
<dbReference type="FunFam" id="1.20.810.10:FF:000002">
    <property type="entry name" value="Cytochrome b"/>
    <property type="match status" value="1"/>
</dbReference>
<dbReference type="Gene3D" id="1.20.810.10">
    <property type="entry name" value="Cytochrome Bc1 Complex, Chain C"/>
    <property type="match status" value="1"/>
</dbReference>
<dbReference type="InterPro" id="IPR005798">
    <property type="entry name" value="Cyt_b/b6_C"/>
</dbReference>
<dbReference type="InterPro" id="IPR036150">
    <property type="entry name" value="Cyt_b/b6_C_sf"/>
</dbReference>
<dbReference type="InterPro" id="IPR005797">
    <property type="entry name" value="Cyt_b/b6_N"/>
</dbReference>
<dbReference type="InterPro" id="IPR027387">
    <property type="entry name" value="Cytb/b6-like_sf"/>
</dbReference>
<dbReference type="InterPro" id="IPR030689">
    <property type="entry name" value="Cytochrome_b"/>
</dbReference>
<dbReference type="InterPro" id="IPR048260">
    <property type="entry name" value="Cytochrome_b_C_euk/bac"/>
</dbReference>
<dbReference type="InterPro" id="IPR048259">
    <property type="entry name" value="Cytochrome_b_N_euk/bac"/>
</dbReference>
<dbReference type="InterPro" id="IPR016174">
    <property type="entry name" value="Di-haem_cyt_TM"/>
</dbReference>
<dbReference type="PANTHER" id="PTHR19271">
    <property type="entry name" value="CYTOCHROME B"/>
    <property type="match status" value="1"/>
</dbReference>
<dbReference type="PANTHER" id="PTHR19271:SF16">
    <property type="entry name" value="CYTOCHROME B"/>
    <property type="match status" value="1"/>
</dbReference>
<dbReference type="Pfam" id="PF00032">
    <property type="entry name" value="Cytochrom_B_C"/>
    <property type="match status" value="1"/>
</dbReference>
<dbReference type="Pfam" id="PF00033">
    <property type="entry name" value="Cytochrome_B"/>
    <property type="match status" value="1"/>
</dbReference>
<dbReference type="PIRSF" id="PIRSF038885">
    <property type="entry name" value="COB"/>
    <property type="match status" value="1"/>
</dbReference>
<dbReference type="SUPFAM" id="SSF81648">
    <property type="entry name" value="a domain/subunit of cytochrome bc1 complex (Ubiquinol-cytochrome c reductase)"/>
    <property type="match status" value="1"/>
</dbReference>
<dbReference type="SUPFAM" id="SSF81342">
    <property type="entry name" value="Transmembrane di-heme cytochromes"/>
    <property type="match status" value="1"/>
</dbReference>
<dbReference type="PROSITE" id="PS51003">
    <property type="entry name" value="CYTB_CTER"/>
    <property type="match status" value="1"/>
</dbReference>
<dbReference type="PROSITE" id="PS51002">
    <property type="entry name" value="CYTB_NTER"/>
    <property type="match status" value="1"/>
</dbReference>
<accession>Q9MJV1</accession>
<comment type="function">
    <text evidence="2">Component of the ubiquinol-cytochrome c reductase complex (complex III or cytochrome b-c1 complex) that is part of the mitochondrial respiratory chain. The b-c1 complex mediates electron transfer from ubiquinol to cytochrome c. Contributes to the generation of a proton gradient across the mitochondrial membrane that is then used for ATP synthesis.</text>
</comment>
<comment type="cofactor">
    <cofactor evidence="2">
        <name>heme b</name>
        <dbReference type="ChEBI" id="CHEBI:60344"/>
    </cofactor>
    <text evidence="2">Binds 2 heme b groups non-covalently.</text>
</comment>
<comment type="subunit">
    <text evidence="2">The cytochrome bc1 complex contains 11 subunits: 3 respiratory subunits (MT-CYB, CYC1 and UQCRFS1), 2 core proteins (UQCRC1 and UQCRC2) and 6 low-molecular weight proteins (UQCRH/QCR6, UQCRB/QCR7, UQCRQ/QCR8, UQCR10/QCR9, UQCR11/QCR10 and a cleavage product of UQCRFS1). This cytochrome bc1 complex then forms a dimer.</text>
</comment>
<comment type="subcellular location">
    <subcellularLocation>
        <location evidence="2">Mitochondrion inner membrane</location>
        <topology evidence="2">Multi-pass membrane protein</topology>
    </subcellularLocation>
</comment>
<comment type="miscellaneous">
    <text evidence="1">Heme 1 (or BL or b562) is low-potential and absorbs at about 562 nm, and heme 2 (or BH or b566) is high-potential and absorbs at about 566 nm.</text>
</comment>
<comment type="similarity">
    <text evidence="3 4">Belongs to the cytochrome b family.</text>
</comment>
<comment type="caution">
    <text evidence="2">The full-length protein contains only eight transmembrane helices, not nine as predicted by bioinformatics tools.</text>
</comment>
<gene>
    <name type="primary">MT-CYB</name>
    <name type="synonym">COB</name>
    <name type="synonym">CYTB</name>
    <name type="synonym">MTCYB</name>
</gene>